<evidence type="ECO:0000250" key="1">
    <source>
        <dbReference type="UniProtKB" id="P0AF18"/>
    </source>
</evidence>
<evidence type="ECO:0000269" key="2">
    <source>
    </source>
</evidence>
<evidence type="ECO:0000269" key="3">
    <source>
    </source>
</evidence>
<evidence type="ECO:0000269" key="4">
    <source>
    </source>
</evidence>
<evidence type="ECO:0000303" key="5">
    <source>
    </source>
</evidence>
<evidence type="ECO:0000305" key="6"/>
<evidence type="ECO:0000305" key="7">
    <source>
    </source>
</evidence>
<evidence type="ECO:0007744" key="8">
    <source>
        <dbReference type="PDB" id="2VHL"/>
    </source>
</evidence>
<evidence type="ECO:0007829" key="9">
    <source>
        <dbReference type="PDB" id="2VHL"/>
    </source>
</evidence>
<comment type="function">
    <text evidence="2 4">Involved in the first committed step in the biosynthesis of amino-sugar-nucleotides (PubMed:14557261). Catalyzes the hydrolysis of the N-acetyl group of N-acetylglucosamine-6-phosphate (GlcNAc-6-P) to yield glucosamine 6-phosphate and acetate (PubMed:14557261). Essential for growth on N-acetylglucosamine (PubMed:23667565).</text>
</comment>
<comment type="catalytic activity">
    <reaction evidence="2">
        <text>N-acetyl-D-glucosamine 6-phosphate + H2O = D-glucosamine 6-phosphate + acetate</text>
        <dbReference type="Rhea" id="RHEA:22936"/>
        <dbReference type="ChEBI" id="CHEBI:15377"/>
        <dbReference type="ChEBI" id="CHEBI:30089"/>
        <dbReference type="ChEBI" id="CHEBI:57513"/>
        <dbReference type="ChEBI" id="CHEBI:58725"/>
        <dbReference type="EC" id="3.5.1.25"/>
    </reaction>
</comment>
<comment type="cofactor">
    <cofactor evidence="2">
        <name>a divalent metal cation</name>
        <dbReference type="ChEBI" id="CHEBI:60240"/>
    </cofactor>
    <text evidence="2">Binds 2 divalent metal cations per subunit.</text>
</comment>
<comment type="pathway">
    <text evidence="6">Amino-sugar metabolism; N-acetylneuraminate degradation; D-fructose 6-phosphate from N-acetylneuraminate: step 4/5.</text>
</comment>
<comment type="subunit">
    <text evidence="2">Homodimer.</text>
</comment>
<comment type="induction">
    <text evidence="3">Expression is repressed by the HTH-type transcriptional regulator NagR.</text>
</comment>
<comment type="disruption phenotype">
    <text evidence="4">Deletion of the gene prevents growth on N-acetylglucosamine, but has no effect on growth on glucosamine.</text>
</comment>
<comment type="similarity">
    <text evidence="6">Belongs to the metallo-dependent hydrolases superfamily. NagA family.</text>
</comment>
<proteinExistence type="evidence at protein level"/>
<gene>
    <name type="primary">nagA</name>
    <name type="ordered locus">BSU35010</name>
</gene>
<dbReference type="EC" id="3.5.1.25" evidence="2"/>
<dbReference type="EMBL" id="AF017113">
    <property type="protein sequence ID" value="AAC67285.1"/>
    <property type="molecule type" value="Genomic_DNA"/>
</dbReference>
<dbReference type="EMBL" id="AL009126">
    <property type="protein sequence ID" value="CAB15506.1"/>
    <property type="molecule type" value="Genomic_DNA"/>
</dbReference>
<dbReference type="PIR" id="A69664">
    <property type="entry name" value="A69664"/>
</dbReference>
<dbReference type="RefSeq" id="NP_391381.1">
    <property type="nucleotide sequence ID" value="NC_000964.3"/>
</dbReference>
<dbReference type="RefSeq" id="WP_003243413.1">
    <property type="nucleotide sequence ID" value="NZ_OZ025638.1"/>
</dbReference>
<dbReference type="PDB" id="2VHL">
    <property type="method" value="X-ray"/>
    <property type="resolution" value="2.05 A"/>
    <property type="chains" value="A/B=1-396"/>
</dbReference>
<dbReference type="PDBsum" id="2VHL"/>
<dbReference type="SMR" id="O34450"/>
<dbReference type="FunCoup" id="O34450">
    <property type="interactions" value="315"/>
</dbReference>
<dbReference type="STRING" id="224308.BSU35010"/>
<dbReference type="DrugBank" id="DB02657">
    <property type="generic name" value="Glucosamine 6-Phosphate"/>
</dbReference>
<dbReference type="MEROPS" id="M38.983"/>
<dbReference type="jPOST" id="O34450"/>
<dbReference type="PaxDb" id="224308-BSU35010"/>
<dbReference type="EnsemblBacteria" id="CAB15506">
    <property type="protein sequence ID" value="CAB15506"/>
    <property type="gene ID" value="BSU_35010"/>
</dbReference>
<dbReference type="GeneID" id="936621"/>
<dbReference type="KEGG" id="bsu:BSU35010"/>
<dbReference type="PATRIC" id="fig|224308.179.peg.3789"/>
<dbReference type="eggNOG" id="COG1820">
    <property type="taxonomic scope" value="Bacteria"/>
</dbReference>
<dbReference type="InParanoid" id="O34450"/>
<dbReference type="OrthoDB" id="9776488at2"/>
<dbReference type="PhylomeDB" id="O34450"/>
<dbReference type="BioCyc" id="BSUB:BSU35010-MONOMER"/>
<dbReference type="SABIO-RK" id="O34450"/>
<dbReference type="UniPathway" id="UPA00629">
    <property type="reaction ID" value="UER00683"/>
</dbReference>
<dbReference type="EvolutionaryTrace" id="O34450"/>
<dbReference type="Proteomes" id="UP000001570">
    <property type="component" value="Chromosome"/>
</dbReference>
<dbReference type="GO" id="GO:0005506">
    <property type="term" value="F:iron ion binding"/>
    <property type="evidence" value="ECO:0000314"/>
    <property type="project" value="UniProtKB"/>
</dbReference>
<dbReference type="GO" id="GO:0008448">
    <property type="term" value="F:N-acetylglucosamine-6-phosphate deacetylase activity"/>
    <property type="evidence" value="ECO:0000314"/>
    <property type="project" value="UniProtKB"/>
</dbReference>
<dbReference type="GO" id="GO:0042803">
    <property type="term" value="F:protein homodimerization activity"/>
    <property type="evidence" value="ECO:0000314"/>
    <property type="project" value="UniProtKB"/>
</dbReference>
<dbReference type="GO" id="GO:0006046">
    <property type="term" value="P:N-acetylglucosamine catabolic process"/>
    <property type="evidence" value="ECO:0000314"/>
    <property type="project" value="UniProtKB"/>
</dbReference>
<dbReference type="GO" id="GO:0019262">
    <property type="term" value="P:N-acetylneuraminate catabolic process"/>
    <property type="evidence" value="ECO:0007669"/>
    <property type="project" value="UniProtKB-UniPathway"/>
</dbReference>
<dbReference type="CDD" id="cd00854">
    <property type="entry name" value="NagA"/>
    <property type="match status" value="1"/>
</dbReference>
<dbReference type="FunFam" id="3.20.20.140:FF:000004">
    <property type="entry name" value="N-acetylglucosamine-6-phosphate deacetylase"/>
    <property type="match status" value="1"/>
</dbReference>
<dbReference type="Gene3D" id="3.20.20.140">
    <property type="entry name" value="Metal-dependent hydrolases"/>
    <property type="match status" value="1"/>
</dbReference>
<dbReference type="Gene3D" id="2.30.40.10">
    <property type="entry name" value="Urease, subunit C, domain 1"/>
    <property type="match status" value="1"/>
</dbReference>
<dbReference type="InterPro" id="IPR006680">
    <property type="entry name" value="Amidohydro-rel"/>
</dbReference>
<dbReference type="InterPro" id="IPR003764">
    <property type="entry name" value="GlcNAc_6-P_deAcase"/>
</dbReference>
<dbReference type="InterPro" id="IPR011059">
    <property type="entry name" value="Metal-dep_hydrolase_composite"/>
</dbReference>
<dbReference type="InterPro" id="IPR032466">
    <property type="entry name" value="Metal_Hydrolase"/>
</dbReference>
<dbReference type="NCBIfam" id="TIGR00221">
    <property type="entry name" value="nagA"/>
    <property type="match status" value="1"/>
</dbReference>
<dbReference type="PANTHER" id="PTHR11113">
    <property type="entry name" value="N-ACETYLGLUCOSAMINE-6-PHOSPHATE DEACETYLASE"/>
    <property type="match status" value="1"/>
</dbReference>
<dbReference type="PANTHER" id="PTHR11113:SF14">
    <property type="entry name" value="N-ACETYLGLUCOSAMINE-6-PHOSPHATE DEACETYLASE"/>
    <property type="match status" value="1"/>
</dbReference>
<dbReference type="Pfam" id="PF01979">
    <property type="entry name" value="Amidohydro_1"/>
    <property type="match status" value="1"/>
</dbReference>
<dbReference type="Pfam" id="PF22644">
    <property type="entry name" value="BsNagA_N"/>
    <property type="match status" value="1"/>
</dbReference>
<dbReference type="PIRSF" id="PIRSF038994">
    <property type="entry name" value="NagA"/>
    <property type="match status" value="1"/>
</dbReference>
<dbReference type="SUPFAM" id="SSF51338">
    <property type="entry name" value="Composite domain of metallo-dependent hydrolases"/>
    <property type="match status" value="1"/>
</dbReference>
<dbReference type="SUPFAM" id="SSF51556">
    <property type="entry name" value="Metallo-dependent hydrolases"/>
    <property type="match status" value="1"/>
</dbReference>
<keyword id="KW-0002">3D-structure</keyword>
<keyword id="KW-0119">Carbohydrate metabolism</keyword>
<keyword id="KW-0378">Hydrolase</keyword>
<keyword id="KW-0408">Iron</keyword>
<keyword id="KW-0479">Metal-binding</keyword>
<keyword id="KW-1185">Reference proteome</keyword>
<protein>
    <recommendedName>
        <fullName evidence="5">N-acetylglucosamine-6-phosphate deacetylase</fullName>
        <shortName evidence="5">GlcNAc 6-P deacetylase</shortName>
        <ecNumber evidence="2">3.5.1.25</ecNumber>
    </recommendedName>
</protein>
<sequence length="396" mass="42622">MAESLLIKDIAIVTENEVIKNGYVGINDGKISTVSTERPKEPYSKEIQAPADSVLLPGMIDIHIHGGYGADTMDASFSTLDIMSSRLPEEGTTSFLATTITQEHGNISQALVNAREWKAAEESSLLGAELLGIHLEGPFVSPKRAGAQPKEWIRPSDVELFKKWQQEAGGLIKIVTLAPEEDQHFELIRHLKDESIIASMGHTDADSALLSDAAKAGASHMTHLYNAMSPFHHREPGVIGTALAHDGFVTELIADGIHSHPLAAKLAFLAKGSSKLILITDSMRAKGLKDGVYEFGGQSVTVRGRTALLSDGTLAGSILKMNEGARHMREFTNCSWTDIANITSENAAKQLGIFDRKGSVTVGKDADLVIVSSDCEVILTICRGNIAFISKEADQI</sequence>
<name>NAGA_BACSU</name>
<reference key="1">
    <citation type="submission" date="1997-11" db="EMBL/GenBank/DDBJ databases">
        <title>Nucleotide sequence of the 300-304 chromosomal segment of Bacillus subtilis.</title>
        <authorList>
            <person name="Lazarevic V."/>
            <person name="Soldo B."/>
            <person name="Rivolta C."/>
            <person name="Reynolds S."/>
            <person name="Mauel C."/>
            <person name="Karamata D."/>
        </authorList>
    </citation>
    <scope>NUCLEOTIDE SEQUENCE [GENOMIC DNA]</scope>
</reference>
<reference key="2">
    <citation type="journal article" date="1997" name="Nature">
        <title>The complete genome sequence of the Gram-positive bacterium Bacillus subtilis.</title>
        <authorList>
            <person name="Kunst F."/>
            <person name="Ogasawara N."/>
            <person name="Moszer I."/>
            <person name="Albertini A.M."/>
            <person name="Alloni G."/>
            <person name="Azevedo V."/>
            <person name="Bertero M.G."/>
            <person name="Bessieres P."/>
            <person name="Bolotin A."/>
            <person name="Borchert S."/>
            <person name="Borriss R."/>
            <person name="Boursier L."/>
            <person name="Brans A."/>
            <person name="Braun M."/>
            <person name="Brignell S.C."/>
            <person name="Bron S."/>
            <person name="Brouillet S."/>
            <person name="Bruschi C.V."/>
            <person name="Caldwell B."/>
            <person name="Capuano V."/>
            <person name="Carter N.M."/>
            <person name="Choi S.-K."/>
            <person name="Codani J.-J."/>
            <person name="Connerton I.F."/>
            <person name="Cummings N.J."/>
            <person name="Daniel R.A."/>
            <person name="Denizot F."/>
            <person name="Devine K.M."/>
            <person name="Duesterhoeft A."/>
            <person name="Ehrlich S.D."/>
            <person name="Emmerson P.T."/>
            <person name="Entian K.-D."/>
            <person name="Errington J."/>
            <person name="Fabret C."/>
            <person name="Ferrari E."/>
            <person name="Foulger D."/>
            <person name="Fritz C."/>
            <person name="Fujita M."/>
            <person name="Fujita Y."/>
            <person name="Fuma S."/>
            <person name="Galizzi A."/>
            <person name="Galleron N."/>
            <person name="Ghim S.-Y."/>
            <person name="Glaser P."/>
            <person name="Goffeau A."/>
            <person name="Golightly E.J."/>
            <person name="Grandi G."/>
            <person name="Guiseppi G."/>
            <person name="Guy B.J."/>
            <person name="Haga K."/>
            <person name="Haiech J."/>
            <person name="Harwood C.R."/>
            <person name="Henaut A."/>
            <person name="Hilbert H."/>
            <person name="Holsappel S."/>
            <person name="Hosono S."/>
            <person name="Hullo M.-F."/>
            <person name="Itaya M."/>
            <person name="Jones L.-M."/>
            <person name="Joris B."/>
            <person name="Karamata D."/>
            <person name="Kasahara Y."/>
            <person name="Klaerr-Blanchard M."/>
            <person name="Klein C."/>
            <person name="Kobayashi Y."/>
            <person name="Koetter P."/>
            <person name="Koningstein G."/>
            <person name="Krogh S."/>
            <person name="Kumano M."/>
            <person name="Kurita K."/>
            <person name="Lapidus A."/>
            <person name="Lardinois S."/>
            <person name="Lauber J."/>
            <person name="Lazarevic V."/>
            <person name="Lee S.-M."/>
            <person name="Levine A."/>
            <person name="Liu H."/>
            <person name="Masuda S."/>
            <person name="Mauel C."/>
            <person name="Medigue C."/>
            <person name="Medina N."/>
            <person name="Mellado R.P."/>
            <person name="Mizuno M."/>
            <person name="Moestl D."/>
            <person name="Nakai S."/>
            <person name="Noback M."/>
            <person name="Noone D."/>
            <person name="O'Reilly M."/>
            <person name="Ogawa K."/>
            <person name="Ogiwara A."/>
            <person name="Oudega B."/>
            <person name="Park S.-H."/>
            <person name="Parro V."/>
            <person name="Pohl T.M."/>
            <person name="Portetelle D."/>
            <person name="Porwollik S."/>
            <person name="Prescott A.M."/>
            <person name="Presecan E."/>
            <person name="Pujic P."/>
            <person name="Purnelle B."/>
            <person name="Rapoport G."/>
            <person name="Rey M."/>
            <person name="Reynolds S."/>
            <person name="Rieger M."/>
            <person name="Rivolta C."/>
            <person name="Rocha E."/>
            <person name="Roche B."/>
            <person name="Rose M."/>
            <person name="Sadaie Y."/>
            <person name="Sato T."/>
            <person name="Scanlan E."/>
            <person name="Schleich S."/>
            <person name="Schroeter R."/>
            <person name="Scoffone F."/>
            <person name="Sekiguchi J."/>
            <person name="Sekowska A."/>
            <person name="Seror S.J."/>
            <person name="Serror P."/>
            <person name="Shin B.-S."/>
            <person name="Soldo B."/>
            <person name="Sorokin A."/>
            <person name="Tacconi E."/>
            <person name="Takagi T."/>
            <person name="Takahashi H."/>
            <person name="Takemaru K."/>
            <person name="Takeuchi M."/>
            <person name="Tamakoshi A."/>
            <person name="Tanaka T."/>
            <person name="Terpstra P."/>
            <person name="Tognoni A."/>
            <person name="Tosato V."/>
            <person name="Uchiyama S."/>
            <person name="Vandenbol M."/>
            <person name="Vannier F."/>
            <person name="Vassarotti A."/>
            <person name="Viari A."/>
            <person name="Wambutt R."/>
            <person name="Wedler E."/>
            <person name="Wedler H."/>
            <person name="Weitzenegger T."/>
            <person name="Winters P."/>
            <person name="Wipat A."/>
            <person name="Yamamoto H."/>
            <person name="Yamane K."/>
            <person name="Yasumoto K."/>
            <person name="Yata K."/>
            <person name="Yoshida K."/>
            <person name="Yoshikawa H.-F."/>
            <person name="Zumstein E."/>
            <person name="Yoshikawa H."/>
            <person name="Danchin A."/>
        </authorList>
    </citation>
    <scope>NUCLEOTIDE SEQUENCE [LARGE SCALE GENOMIC DNA]</scope>
    <source>
        <strain>168</strain>
    </source>
</reference>
<reference key="3">
    <citation type="journal article" date="2011" name="J. Bacteriol.">
        <title>Regulon of the N-acetylglucosamine utilization regulator NagR in Bacillus subtilis.</title>
        <authorList>
            <person name="Bertram R."/>
            <person name="Rigali S."/>
            <person name="Wood N."/>
            <person name="Lulko A.T."/>
            <person name="Kuipers O.P."/>
            <person name="Titgemeyer F."/>
        </authorList>
    </citation>
    <scope>INDUCTION</scope>
</reference>
<reference key="4">
    <citation type="journal article" date="2013" name="PLoS ONE">
        <title>The use of amino sugars by Bacillus subtilis: presence of a unique operon for the catabolism of glucosamine.</title>
        <authorList>
            <person name="Gaugue I."/>
            <person name="Oberto J."/>
            <person name="Putzer H."/>
            <person name="Plumbridge J."/>
        </authorList>
    </citation>
    <scope>FUNCTION</scope>
    <scope>DISRUPTION PHENOTYPE</scope>
    <source>
        <strain>168</strain>
    </source>
</reference>
<reference evidence="8" key="5">
    <citation type="journal article" date="2004" name="J. Biol. Chem.">
        <title>The three-dimensional structure of the N-acetylglucosamine-6-phosphate deacetylase, NagA, from Bacillus subtilis: a member of the urease superfamily.</title>
        <authorList>
            <person name="Vincent F."/>
            <person name="Yates D."/>
            <person name="Garman E."/>
            <person name="Davies G.J."/>
            <person name="Brannigan J.A."/>
        </authorList>
    </citation>
    <scope>X-RAY CRYSTALLOGRAPHY (2.05 ANGSTROMS) IN COMPLEX WITH IRON AND REACTION PRODUCT</scope>
    <scope>FUNCTION</scope>
    <scope>CATALYTIC ACTIVITY</scope>
    <scope>COFACTOR</scope>
    <scope>SUBUNIT</scope>
    <scope>REACTION MECHANISM</scope>
    <source>
        <strain>168 / IG20</strain>
    </source>
</reference>
<feature type="chain" id="PRO_0000170914" description="N-acetylglucosamine-6-phosphate deacetylase">
    <location>
        <begin position="1"/>
        <end position="396"/>
    </location>
</feature>
<feature type="active site" description="Proton donor" evidence="7">
    <location>
        <position position="281"/>
    </location>
</feature>
<feature type="binding site" evidence="2 8">
    <location>
        <position position="63"/>
    </location>
    <ligand>
        <name>Fe cation</name>
        <dbReference type="ChEBI" id="CHEBI:24875"/>
        <label>1</label>
    </ligand>
</feature>
<feature type="binding site" evidence="2 8">
    <location>
        <position position="65"/>
    </location>
    <ligand>
        <name>Fe cation</name>
        <dbReference type="ChEBI" id="CHEBI:24875"/>
        <label>1</label>
    </ligand>
</feature>
<feature type="binding site" evidence="2 8">
    <location>
        <position position="136"/>
    </location>
    <ligand>
        <name>Fe cation</name>
        <dbReference type="ChEBI" id="CHEBI:24875"/>
        <label>1</label>
    </ligand>
</feature>
<feature type="binding site" evidence="2 8">
    <location>
        <position position="136"/>
    </location>
    <ligand>
        <name>Fe cation</name>
        <dbReference type="ChEBI" id="CHEBI:24875"/>
        <label>2</label>
    </ligand>
</feature>
<feature type="binding site" evidence="2">
    <location>
        <begin position="147"/>
        <end position="148"/>
    </location>
    <ligand>
        <name>substrate</name>
    </ligand>
</feature>
<feature type="binding site" evidence="2 8">
    <location>
        <position position="202"/>
    </location>
    <ligand>
        <name>Fe cation</name>
        <dbReference type="ChEBI" id="CHEBI:24875"/>
        <label>2</label>
    </ligand>
</feature>
<feature type="binding site" evidence="2 8">
    <location>
        <position position="223"/>
    </location>
    <ligand>
        <name>Fe cation</name>
        <dbReference type="ChEBI" id="CHEBI:24875"/>
        <label>2</label>
    </ligand>
</feature>
<feature type="binding site" evidence="2">
    <location>
        <begin position="226"/>
        <end position="227"/>
    </location>
    <ligand>
        <name>substrate</name>
    </ligand>
</feature>
<feature type="binding site" evidence="1">
    <location>
        <position position="234"/>
    </location>
    <ligand>
        <name>substrate</name>
    </ligand>
</feature>
<feature type="binding site" evidence="2">
    <location>
        <begin position="255"/>
        <end position="258"/>
    </location>
    <ligand>
        <name>substrate</name>
    </ligand>
</feature>
<feature type="binding site" evidence="2 8">
    <location>
        <position position="281"/>
    </location>
    <ligand>
        <name>Fe cation</name>
        <dbReference type="ChEBI" id="CHEBI:24875"/>
        <label>1</label>
    </ligand>
</feature>
<feature type="binding site" evidence="2">
    <location>
        <begin position="314"/>
        <end position="316"/>
    </location>
    <ligand>
        <name>substrate</name>
    </ligand>
</feature>
<feature type="strand" evidence="9">
    <location>
        <begin position="5"/>
        <end position="13"/>
    </location>
</feature>
<feature type="strand" evidence="9">
    <location>
        <begin position="18"/>
        <end position="27"/>
    </location>
</feature>
<feature type="strand" evidence="9">
    <location>
        <begin position="30"/>
        <end position="37"/>
    </location>
</feature>
<feature type="strand" evidence="9">
    <location>
        <begin position="44"/>
        <end position="48"/>
    </location>
</feature>
<feature type="strand" evidence="9">
    <location>
        <begin position="54"/>
        <end position="57"/>
    </location>
</feature>
<feature type="strand" evidence="9">
    <location>
        <begin position="59"/>
        <end position="64"/>
    </location>
</feature>
<feature type="helix" evidence="9">
    <location>
        <begin position="72"/>
        <end position="74"/>
    </location>
</feature>
<feature type="helix" evidence="9">
    <location>
        <begin position="77"/>
        <end position="86"/>
    </location>
</feature>
<feature type="helix" evidence="9">
    <location>
        <begin position="87"/>
        <end position="90"/>
    </location>
</feature>
<feature type="strand" evidence="9">
    <location>
        <begin position="92"/>
        <end position="98"/>
    </location>
</feature>
<feature type="helix" evidence="9">
    <location>
        <begin position="104"/>
        <end position="120"/>
    </location>
</feature>
<feature type="helix" evidence="9">
    <location>
        <begin position="123"/>
        <end position="125"/>
    </location>
</feature>
<feature type="strand" evidence="9">
    <location>
        <begin position="126"/>
        <end position="136"/>
    </location>
</feature>
<feature type="strand" evidence="9">
    <location>
        <begin position="138"/>
        <end position="140"/>
    </location>
</feature>
<feature type="helix" evidence="9">
    <location>
        <begin position="142"/>
        <end position="144"/>
    </location>
</feature>
<feature type="helix" evidence="9">
    <location>
        <begin position="150"/>
        <end position="152"/>
    </location>
</feature>
<feature type="helix" evidence="9">
    <location>
        <begin position="158"/>
        <end position="167"/>
    </location>
</feature>
<feature type="turn" evidence="9">
    <location>
        <begin position="168"/>
        <end position="170"/>
    </location>
</feature>
<feature type="strand" evidence="9">
    <location>
        <begin position="172"/>
        <end position="177"/>
    </location>
</feature>
<feature type="helix" evidence="9">
    <location>
        <begin position="179"/>
        <end position="181"/>
    </location>
</feature>
<feature type="helix" evidence="9">
    <location>
        <begin position="183"/>
        <end position="185"/>
    </location>
</feature>
<feature type="helix" evidence="9">
    <location>
        <begin position="186"/>
        <end position="193"/>
    </location>
</feature>
<feature type="strand" evidence="9">
    <location>
        <begin position="197"/>
        <end position="200"/>
    </location>
</feature>
<feature type="helix" evidence="9">
    <location>
        <begin position="207"/>
        <end position="215"/>
    </location>
</feature>
<feature type="strand" evidence="9">
    <location>
        <begin position="220"/>
        <end position="223"/>
    </location>
</feature>
<feature type="strand" evidence="9">
    <location>
        <begin position="226"/>
        <end position="228"/>
    </location>
</feature>
<feature type="strand" evidence="9">
    <location>
        <begin position="233"/>
        <end position="235"/>
    </location>
</feature>
<feature type="helix" evidence="9">
    <location>
        <begin position="237"/>
        <end position="244"/>
    </location>
</feature>
<feature type="strand" evidence="9">
    <location>
        <begin position="249"/>
        <end position="253"/>
    </location>
</feature>
<feature type="strand" evidence="9">
    <location>
        <begin position="255"/>
        <end position="259"/>
    </location>
</feature>
<feature type="helix" evidence="9">
    <location>
        <begin position="261"/>
        <end position="271"/>
    </location>
</feature>
<feature type="strand" evidence="9">
    <location>
        <begin position="275"/>
        <end position="279"/>
    </location>
</feature>
<feature type="turn" evidence="9">
    <location>
        <begin position="284"/>
        <end position="287"/>
    </location>
</feature>
<feature type="strand" evidence="9">
    <location>
        <begin position="290"/>
        <end position="295"/>
    </location>
</feature>
<feature type="strand" evidence="9">
    <location>
        <begin position="298"/>
        <end position="303"/>
    </location>
</feature>
<feature type="strand" evidence="9">
    <location>
        <begin position="306"/>
        <end position="308"/>
    </location>
</feature>
<feature type="helix" evidence="9">
    <location>
        <begin position="321"/>
        <end position="332"/>
    </location>
</feature>
<feature type="helix" evidence="9">
    <location>
        <begin position="336"/>
        <end position="343"/>
    </location>
</feature>
<feature type="helix" evidence="9">
    <location>
        <begin position="345"/>
        <end position="351"/>
    </location>
</feature>
<feature type="turn" evidence="9">
    <location>
        <begin position="354"/>
        <end position="356"/>
    </location>
</feature>
<feature type="strand" evidence="9">
    <location>
        <begin position="357"/>
        <end position="359"/>
    </location>
</feature>
<feature type="strand" evidence="9">
    <location>
        <begin position="368"/>
        <end position="371"/>
    </location>
</feature>
<feature type="strand" evidence="9">
    <location>
        <begin position="377"/>
        <end position="382"/>
    </location>
</feature>
<feature type="strand" evidence="9">
    <location>
        <begin position="385"/>
        <end position="389"/>
    </location>
</feature>
<organism>
    <name type="scientific">Bacillus subtilis (strain 168)</name>
    <dbReference type="NCBI Taxonomy" id="224308"/>
    <lineage>
        <taxon>Bacteria</taxon>
        <taxon>Bacillati</taxon>
        <taxon>Bacillota</taxon>
        <taxon>Bacilli</taxon>
        <taxon>Bacillales</taxon>
        <taxon>Bacillaceae</taxon>
        <taxon>Bacillus</taxon>
    </lineage>
</organism>
<accession>O34450</accession>